<dbReference type="EMBL" id="CP000727">
    <property type="protein sequence ID" value="ABS37132.1"/>
    <property type="molecule type" value="Genomic_DNA"/>
</dbReference>
<dbReference type="EMBL" id="AM412317">
    <property type="protein sequence ID" value="CAL84551.1"/>
    <property type="molecule type" value="Genomic_DNA"/>
</dbReference>
<dbReference type="RefSeq" id="WP_012048023.1">
    <property type="nucleotide sequence ID" value="NC_009698.1"/>
</dbReference>
<dbReference type="RefSeq" id="YP_001255481.1">
    <property type="nucleotide sequence ID" value="NC_009495.1"/>
</dbReference>
<dbReference type="RefSeq" id="YP_001388717.1">
    <property type="nucleotide sequence ID" value="NC_009698.1"/>
</dbReference>
<dbReference type="SMR" id="A5I669"/>
<dbReference type="GeneID" id="5185871"/>
<dbReference type="KEGG" id="cbh:CLC_2886"/>
<dbReference type="KEGG" id="cbo:CBO2989"/>
<dbReference type="PATRIC" id="fig|413999.7.peg.2967"/>
<dbReference type="HOGENOM" id="CLU_061463_3_2_9"/>
<dbReference type="PRO" id="PR:A5I669"/>
<dbReference type="Proteomes" id="UP000001986">
    <property type="component" value="Chromosome"/>
</dbReference>
<dbReference type="GO" id="GO:0005737">
    <property type="term" value="C:cytoplasm"/>
    <property type="evidence" value="ECO:0007669"/>
    <property type="project" value="UniProtKB-ARBA"/>
</dbReference>
<dbReference type="GO" id="GO:1990904">
    <property type="term" value="C:ribonucleoprotein complex"/>
    <property type="evidence" value="ECO:0007669"/>
    <property type="project" value="UniProtKB-KW"/>
</dbReference>
<dbReference type="GO" id="GO:0005840">
    <property type="term" value="C:ribosome"/>
    <property type="evidence" value="ECO:0007669"/>
    <property type="project" value="UniProtKB-KW"/>
</dbReference>
<dbReference type="GO" id="GO:0019843">
    <property type="term" value="F:rRNA binding"/>
    <property type="evidence" value="ECO:0007669"/>
    <property type="project" value="UniProtKB-UniRule"/>
</dbReference>
<dbReference type="GO" id="GO:0003735">
    <property type="term" value="F:structural constituent of ribosome"/>
    <property type="evidence" value="ECO:0000318"/>
    <property type="project" value="GO_Central"/>
</dbReference>
<dbReference type="GO" id="GO:0006412">
    <property type="term" value="P:translation"/>
    <property type="evidence" value="ECO:0007669"/>
    <property type="project" value="UniProtKB-UniRule"/>
</dbReference>
<dbReference type="HAMAP" id="MF_01363">
    <property type="entry name" value="Ribosomal_bL21"/>
    <property type="match status" value="1"/>
</dbReference>
<dbReference type="InterPro" id="IPR028909">
    <property type="entry name" value="bL21-like"/>
</dbReference>
<dbReference type="InterPro" id="IPR036164">
    <property type="entry name" value="bL21-like_sf"/>
</dbReference>
<dbReference type="InterPro" id="IPR001787">
    <property type="entry name" value="Ribosomal_bL21"/>
</dbReference>
<dbReference type="InterPro" id="IPR018258">
    <property type="entry name" value="Ribosomal_bL21_CS"/>
</dbReference>
<dbReference type="NCBIfam" id="TIGR00061">
    <property type="entry name" value="L21"/>
    <property type="match status" value="1"/>
</dbReference>
<dbReference type="PANTHER" id="PTHR21349">
    <property type="entry name" value="50S RIBOSOMAL PROTEIN L21"/>
    <property type="match status" value="1"/>
</dbReference>
<dbReference type="PANTHER" id="PTHR21349:SF0">
    <property type="entry name" value="LARGE RIBOSOMAL SUBUNIT PROTEIN BL21M"/>
    <property type="match status" value="1"/>
</dbReference>
<dbReference type="Pfam" id="PF00829">
    <property type="entry name" value="Ribosomal_L21p"/>
    <property type="match status" value="1"/>
</dbReference>
<dbReference type="SUPFAM" id="SSF141091">
    <property type="entry name" value="L21p-like"/>
    <property type="match status" value="1"/>
</dbReference>
<dbReference type="PROSITE" id="PS01169">
    <property type="entry name" value="RIBOSOMAL_L21"/>
    <property type="match status" value="1"/>
</dbReference>
<accession>A5I669</accession>
<accession>A7G7F2</accession>
<comment type="function">
    <text evidence="1">This protein binds to 23S rRNA in the presence of protein L20.</text>
</comment>
<comment type="subunit">
    <text evidence="1">Part of the 50S ribosomal subunit. Contacts protein L20.</text>
</comment>
<comment type="similarity">
    <text evidence="1">Belongs to the bacterial ribosomal protein bL21 family.</text>
</comment>
<protein>
    <recommendedName>
        <fullName evidence="1">Large ribosomal subunit protein bL21</fullName>
    </recommendedName>
    <alternativeName>
        <fullName evidence="2">50S ribosomal protein L21</fullName>
    </alternativeName>
</protein>
<gene>
    <name evidence="1" type="primary">rplU</name>
    <name type="ordered locus">CBO2989</name>
    <name type="ordered locus">CLC_2886</name>
</gene>
<name>RL21_CLOBH</name>
<proteinExistence type="inferred from homology"/>
<feature type="chain" id="PRO_1000067824" description="Large ribosomal subunit protein bL21">
    <location>
        <begin position="1"/>
        <end position="104"/>
    </location>
</feature>
<evidence type="ECO:0000255" key="1">
    <source>
        <dbReference type="HAMAP-Rule" id="MF_01363"/>
    </source>
</evidence>
<evidence type="ECO:0000305" key="2"/>
<organism>
    <name type="scientific">Clostridium botulinum (strain Hall / ATCC 3502 / NCTC 13319 / Type A)</name>
    <dbReference type="NCBI Taxonomy" id="441771"/>
    <lineage>
        <taxon>Bacteria</taxon>
        <taxon>Bacillati</taxon>
        <taxon>Bacillota</taxon>
        <taxon>Clostridia</taxon>
        <taxon>Eubacteriales</taxon>
        <taxon>Clostridiaceae</taxon>
        <taxon>Clostridium</taxon>
    </lineage>
</organism>
<reference key="1">
    <citation type="journal article" date="2007" name="Genome Res.">
        <title>Genome sequence of a proteolytic (Group I) Clostridium botulinum strain Hall A and comparative analysis of the clostridial genomes.</title>
        <authorList>
            <person name="Sebaihia M."/>
            <person name="Peck M.W."/>
            <person name="Minton N.P."/>
            <person name="Thomson N.R."/>
            <person name="Holden M.T.G."/>
            <person name="Mitchell W.J."/>
            <person name="Carter A.T."/>
            <person name="Bentley S.D."/>
            <person name="Mason D.R."/>
            <person name="Crossman L."/>
            <person name="Paul C.J."/>
            <person name="Ivens A."/>
            <person name="Wells-Bennik M.H.J."/>
            <person name="Davis I.J."/>
            <person name="Cerdeno-Tarraga A.M."/>
            <person name="Churcher C."/>
            <person name="Quail M.A."/>
            <person name="Chillingworth T."/>
            <person name="Feltwell T."/>
            <person name="Fraser A."/>
            <person name="Goodhead I."/>
            <person name="Hance Z."/>
            <person name="Jagels K."/>
            <person name="Larke N."/>
            <person name="Maddison M."/>
            <person name="Moule S."/>
            <person name="Mungall K."/>
            <person name="Norbertczak H."/>
            <person name="Rabbinowitsch E."/>
            <person name="Sanders M."/>
            <person name="Simmonds M."/>
            <person name="White B."/>
            <person name="Whithead S."/>
            <person name="Parkhill J."/>
        </authorList>
    </citation>
    <scope>NUCLEOTIDE SEQUENCE [LARGE SCALE GENOMIC DNA]</scope>
    <source>
        <strain>Hall / ATCC 3502 / NCTC 13319 / Type A</strain>
    </source>
</reference>
<reference key="2">
    <citation type="journal article" date="2007" name="PLoS ONE">
        <title>Analysis of the neurotoxin complex genes in Clostridium botulinum A1-A4 and B1 strains: BoNT/A3, /Ba4 and /B1 clusters are located within plasmids.</title>
        <authorList>
            <person name="Smith T.J."/>
            <person name="Hill K.K."/>
            <person name="Foley B.T."/>
            <person name="Detter J.C."/>
            <person name="Munk A.C."/>
            <person name="Bruce D.C."/>
            <person name="Doggett N.A."/>
            <person name="Smith L.A."/>
            <person name="Marks J.D."/>
            <person name="Xie G."/>
            <person name="Brettin T.S."/>
        </authorList>
    </citation>
    <scope>NUCLEOTIDE SEQUENCE [LARGE SCALE GENOMIC DNA]</scope>
    <source>
        <strain>Hall / ATCC 3502 / NCTC 13319 / Type A</strain>
    </source>
</reference>
<keyword id="KW-1185">Reference proteome</keyword>
<keyword id="KW-0687">Ribonucleoprotein</keyword>
<keyword id="KW-0689">Ribosomal protein</keyword>
<keyword id="KW-0694">RNA-binding</keyword>
<keyword id="KW-0699">rRNA-binding</keyword>
<sequence>MYAVVVTGGKQYKVAEGDILFVEKLTADVDSTVELDNVLLVGKDNGETVVGKPMVEGAKVTAKVLAQGKAKKVVVFKYKPKKDYRKKQGHRQPYTKIQIEKINA</sequence>